<organism>
    <name type="scientific">Streptococcus pneumoniae serotype 2 (strain D39 / NCTC 7466)</name>
    <dbReference type="NCBI Taxonomy" id="373153"/>
    <lineage>
        <taxon>Bacteria</taxon>
        <taxon>Bacillati</taxon>
        <taxon>Bacillota</taxon>
        <taxon>Bacilli</taxon>
        <taxon>Lactobacillales</taxon>
        <taxon>Streptococcaceae</taxon>
        <taxon>Streptococcus</taxon>
    </lineage>
</organism>
<comment type="function">
    <text evidence="1">Reversibly catalyzes the transfer of the carbamoyl group from carbamoyl phosphate (CP) to the N(epsilon) atom of ornithine (ORN) to produce L-citrulline.</text>
</comment>
<comment type="catalytic activity">
    <reaction evidence="2">
        <text>carbamoyl phosphate + L-ornithine = L-citrulline + phosphate + H(+)</text>
        <dbReference type="Rhea" id="RHEA:19513"/>
        <dbReference type="ChEBI" id="CHEBI:15378"/>
        <dbReference type="ChEBI" id="CHEBI:43474"/>
        <dbReference type="ChEBI" id="CHEBI:46911"/>
        <dbReference type="ChEBI" id="CHEBI:57743"/>
        <dbReference type="ChEBI" id="CHEBI:58228"/>
        <dbReference type="EC" id="2.1.3.3"/>
    </reaction>
</comment>
<comment type="pathway">
    <text evidence="2">Amino-acid degradation; L-arginine degradation via ADI pathway; carbamoyl phosphate from L-arginine: step 2/2.</text>
</comment>
<comment type="subcellular location">
    <subcellularLocation>
        <location evidence="2">Cytoplasm</location>
    </subcellularLocation>
</comment>
<comment type="similarity">
    <text evidence="2">Belongs to the aspartate/ornithine carbamoyltransferase superfamily. OTCase family.</text>
</comment>
<gene>
    <name evidence="2" type="primary">arcB</name>
    <name type="ordered locus">SPD_1976</name>
</gene>
<name>OTC_STRP2</name>
<keyword id="KW-0056">Arginine metabolism</keyword>
<keyword id="KW-0963">Cytoplasm</keyword>
<keyword id="KW-1185">Reference proteome</keyword>
<keyword id="KW-0808">Transferase</keyword>
<protein>
    <recommendedName>
        <fullName evidence="2">Ornithine carbamoyltransferase</fullName>
        <shortName evidence="2">OTCase</shortName>
        <ecNumber evidence="2">2.1.3.3</ecNumber>
    </recommendedName>
</protein>
<feature type="chain" id="PRO_1000065122" description="Ornithine carbamoyltransferase">
    <location>
        <begin position="1"/>
        <end position="338"/>
    </location>
</feature>
<feature type="binding site" evidence="2">
    <location>
        <begin position="58"/>
        <end position="61"/>
    </location>
    <ligand>
        <name>carbamoyl phosphate</name>
        <dbReference type="ChEBI" id="CHEBI:58228"/>
    </ligand>
</feature>
<feature type="binding site" evidence="2">
    <location>
        <position position="85"/>
    </location>
    <ligand>
        <name>carbamoyl phosphate</name>
        <dbReference type="ChEBI" id="CHEBI:58228"/>
    </ligand>
</feature>
<feature type="binding site" evidence="2">
    <location>
        <position position="109"/>
    </location>
    <ligand>
        <name>carbamoyl phosphate</name>
        <dbReference type="ChEBI" id="CHEBI:58228"/>
    </ligand>
</feature>
<feature type="binding site" evidence="2">
    <location>
        <begin position="136"/>
        <end position="139"/>
    </location>
    <ligand>
        <name>carbamoyl phosphate</name>
        <dbReference type="ChEBI" id="CHEBI:58228"/>
    </ligand>
</feature>
<feature type="binding site" evidence="2">
    <location>
        <position position="168"/>
    </location>
    <ligand>
        <name>L-ornithine</name>
        <dbReference type="ChEBI" id="CHEBI:46911"/>
    </ligand>
</feature>
<feature type="binding site" evidence="2">
    <location>
        <position position="232"/>
    </location>
    <ligand>
        <name>L-ornithine</name>
        <dbReference type="ChEBI" id="CHEBI:46911"/>
    </ligand>
</feature>
<feature type="binding site" evidence="2">
    <location>
        <begin position="236"/>
        <end position="237"/>
    </location>
    <ligand>
        <name>L-ornithine</name>
        <dbReference type="ChEBI" id="CHEBI:46911"/>
    </ligand>
</feature>
<feature type="binding site" evidence="2">
    <location>
        <begin position="273"/>
        <end position="274"/>
    </location>
    <ligand>
        <name>carbamoyl phosphate</name>
        <dbReference type="ChEBI" id="CHEBI:58228"/>
    </ligand>
</feature>
<feature type="binding site" evidence="2">
    <location>
        <position position="318"/>
    </location>
    <ligand>
        <name>carbamoyl phosphate</name>
        <dbReference type="ChEBI" id="CHEBI:58228"/>
    </ligand>
</feature>
<evidence type="ECO:0000250" key="1"/>
<evidence type="ECO:0000255" key="2">
    <source>
        <dbReference type="HAMAP-Rule" id="MF_01109"/>
    </source>
</evidence>
<proteinExistence type="inferred from homology"/>
<reference key="1">
    <citation type="journal article" date="2007" name="J. Bacteriol.">
        <title>Genome sequence of Avery's virulent serotype 2 strain D39 of Streptococcus pneumoniae and comparison with that of unencapsulated laboratory strain R6.</title>
        <authorList>
            <person name="Lanie J.A."/>
            <person name="Ng W.-L."/>
            <person name="Kazmierczak K.M."/>
            <person name="Andrzejewski T.M."/>
            <person name="Davidsen T.M."/>
            <person name="Wayne K.J."/>
            <person name="Tettelin H."/>
            <person name="Glass J.I."/>
            <person name="Winkler M.E."/>
        </authorList>
    </citation>
    <scope>NUCLEOTIDE SEQUENCE [LARGE SCALE GENOMIC DNA]</scope>
    <source>
        <strain>D39 / NCTC 7466</strain>
    </source>
</reference>
<accession>Q04I25</accession>
<sequence>MTNSVFQGRSFLAEKDFTRAELEYLIGLSAHLKDLKKRNIQHHYLAGKNIALLFEKTSTRTRAAFTTAAIDLGAHPEYLGANDIQLGKKESTEDTAKVLGRMFDGIEFRGFSQRMVEELAEFSGVPVWNGLTDEWHPTQMLADYLTVQENFGRLEGLTLVYCGDGRNNVANSLLVTGAILGVNVHIFSPKELFPEKEIVELAEGFAKESGAHVLITEDADEAVKDADVLYTDVWVSMGEEDKFAERVALLKPYQVNMDLVKKAGNENLIFLHCLPAFHDTHTVYGKDVAEKFGVEEMEVTDEVFRSKYARHFDQAENRMHTIKAVMAATLGNLYIPKV</sequence>
<dbReference type="EC" id="2.1.3.3" evidence="2"/>
<dbReference type="EMBL" id="CP000410">
    <property type="protein sequence ID" value="ABJ54469.1"/>
    <property type="molecule type" value="Genomic_DNA"/>
</dbReference>
<dbReference type="SMR" id="Q04I25"/>
<dbReference type="PaxDb" id="373153-SPD_1976"/>
<dbReference type="KEGG" id="spd:SPD_1976"/>
<dbReference type="eggNOG" id="COG0078">
    <property type="taxonomic scope" value="Bacteria"/>
</dbReference>
<dbReference type="HOGENOM" id="CLU_043846_3_1_9"/>
<dbReference type="BioCyc" id="SPNE373153:G1G6V-2122-MONOMER"/>
<dbReference type="UniPathway" id="UPA00254">
    <property type="reaction ID" value="UER00365"/>
</dbReference>
<dbReference type="Proteomes" id="UP000001452">
    <property type="component" value="Chromosome"/>
</dbReference>
<dbReference type="GO" id="GO:0005737">
    <property type="term" value="C:cytoplasm"/>
    <property type="evidence" value="ECO:0007669"/>
    <property type="project" value="UniProtKB-SubCell"/>
</dbReference>
<dbReference type="GO" id="GO:0016597">
    <property type="term" value="F:amino acid binding"/>
    <property type="evidence" value="ECO:0007669"/>
    <property type="project" value="InterPro"/>
</dbReference>
<dbReference type="GO" id="GO:0004585">
    <property type="term" value="F:ornithine carbamoyltransferase activity"/>
    <property type="evidence" value="ECO:0007669"/>
    <property type="project" value="UniProtKB-UniRule"/>
</dbReference>
<dbReference type="GO" id="GO:0042450">
    <property type="term" value="P:arginine biosynthetic process via ornithine"/>
    <property type="evidence" value="ECO:0007669"/>
    <property type="project" value="TreeGrafter"/>
</dbReference>
<dbReference type="GO" id="GO:0019547">
    <property type="term" value="P:arginine catabolic process to ornithine"/>
    <property type="evidence" value="ECO:0007669"/>
    <property type="project" value="UniProtKB-UniRule"/>
</dbReference>
<dbReference type="GO" id="GO:0019240">
    <property type="term" value="P:citrulline biosynthetic process"/>
    <property type="evidence" value="ECO:0007669"/>
    <property type="project" value="TreeGrafter"/>
</dbReference>
<dbReference type="FunFam" id="3.40.50.1370:FF:000004">
    <property type="entry name" value="Ornithine carbamoyltransferase"/>
    <property type="match status" value="1"/>
</dbReference>
<dbReference type="Gene3D" id="3.40.50.1370">
    <property type="entry name" value="Aspartate/ornithine carbamoyltransferase"/>
    <property type="match status" value="2"/>
</dbReference>
<dbReference type="HAMAP" id="MF_01109">
    <property type="entry name" value="OTCase"/>
    <property type="match status" value="1"/>
</dbReference>
<dbReference type="InterPro" id="IPR006132">
    <property type="entry name" value="Asp/Orn_carbamoyltranf_P-bd"/>
</dbReference>
<dbReference type="InterPro" id="IPR006130">
    <property type="entry name" value="Asp/Orn_carbamoylTrfase"/>
</dbReference>
<dbReference type="InterPro" id="IPR036901">
    <property type="entry name" value="Asp/Orn_carbamoylTrfase_sf"/>
</dbReference>
<dbReference type="InterPro" id="IPR006131">
    <property type="entry name" value="Asp_carbamoyltransf_Asp/Orn-bd"/>
</dbReference>
<dbReference type="InterPro" id="IPR002292">
    <property type="entry name" value="Orn/put_carbamltrans"/>
</dbReference>
<dbReference type="InterPro" id="IPR024904">
    <property type="entry name" value="OTCase_ArgI"/>
</dbReference>
<dbReference type="NCBIfam" id="TIGR00658">
    <property type="entry name" value="orni_carb_tr"/>
    <property type="match status" value="1"/>
</dbReference>
<dbReference type="NCBIfam" id="NF001986">
    <property type="entry name" value="PRK00779.1"/>
    <property type="match status" value="1"/>
</dbReference>
<dbReference type="PANTHER" id="PTHR45753:SF1">
    <property type="entry name" value="ORNITHINE CARBAMOYLTRANSFERASE, CATABOLIC"/>
    <property type="match status" value="1"/>
</dbReference>
<dbReference type="PANTHER" id="PTHR45753">
    <property type="entry name" value="ORNITHINE CARBAMOYLTRANSFERASE, MITOCHONDRIAL"/>
    <property type="match status" value="1"/>
</dbReference>
<dbReference type="Pfam" id="PF00185">
    <property type="entry name" value="OTCace"/>
    <property type="match status" value="1"/>
</dbReference>
<dbReference type="Pfam" id="PF02729">
    <property type="entry name" value="OTCace_N"/>
    <property type="match status" value="1"/>
</dbReference>
<dbReference type="PRINTS" id="PR00100">
    <property type="entry name" value="AOTCASE"/>
</dbReference>
<dbReference type="PRINTS" id="PR00102">
    <property type="entry name" value="OTCASE"/>
</dbReference>
<dbReference type="SUPFAM" id="SSF53671">
    <property type="entry name" value="Aspartate/ornithine carbamoyltransferase"/>
    <property type="match status" value="1"/>
</dbReference>
<dbReference type="PROSITE" id="PS00097">
    <property type="entry name" value="CARBAMOYLTRANSFERASE"/>
    <property type="match status" value="1"/>
</dbReference>